<dbReference type="EMBL" id="CP000416">
    <property type="protein sequence ID" value="ABJ63735.1"/>
    <property type="molecule type" value="Genomic_DNA"/>
</dbReference>
<dbReference type="RefSeq" id="WP_011667360.1">
    <property type="nucleotide sequence ID" value="NC_008497.1"/>
</dbReference>
<dbReference type="SMR" id="Q03ST7"/>
<dbReference type="STRING" id="387344.LVIS_0590"/>
<dbReference type="KEGG" id="lbr:LVIS_0590"/>
<dbReference type="PATRIC" id="fig|387344.15.peg.571"/>
<dbReference type="eggNOG" id="COG0244">
    <property type="taxonomic scope" value="Bacteria"/>
</dbReference>
<dbReference type="HOGENOM" id="CLU_092227_2_0_9"/>
<dbReference type="Proteomes" id="UP000001652">
    <property type="component" value="Chromosome"/>
</dbReference>
<dbReference type="GO" id="GO:0015934">
    <property type="term" value="C:large ribosomal subunit"/>
    <property type="evidence" value="ECO:0007669"/>
    <property type="project" value="InterPro"/>
</dbReference>
<dbReference type="GO" id="GO:0070180">
    <property type="term" value="F:large ribosomal subunit rRNA binding"/>
    <property type="evidence" value="ECO:0007669"/>
    <property type="project" value="UniProtKB-UniRule"/>
</dbReference>
<dbReference type="GO" id="GO:0003735">
    <property type="term" value="F:structural constituent of ribosome"/>
    <property type="evidence" value="ECO:0007669"/>
    <property type="project" value="InterPro"/>
</dbReference>
<dbReference type="GO" id="GO:0006412">
    <property type="term" value="P:translation"/>
    <property type="evidence" value="ECO:0007669"/>
    <property type="project" value="UniProtKB-UniRule"/>
</dbReference>
<dbReference type="CDD" id="cd05797">
    <property type="entry name" value="Ribosomal_L10"/>
    <property type="match status" value="1"/>
</dbReference>
<dbReference type="Gene3D" id="3.30.70.1730">
    <property type="match status" value="1"/>
</dbReference>
<dbReference type="Gene3D" id="6.10.250.290">
    <property type="match status" value="1"/>
</dbReference>
<dbReference type="HAMAP" id="MF_00362">
    <property type="entry name" value="Ribosomal_uL10"/>
    <property type="match status" value="1"/>
</dbReference>
<dbReference type="InterPro" id="IPR001790">
    <property type="entry name" value="Ribosomal_uL10"/>
</dbReference>
<dbReference type="InterPro" id="IPR043141">
    <property type="entry name" value="Ribosomal_uL10-like_sf"/>
</dbReference>
<dbReference type="InterPro" id="IPR022973">
    <property type="entry name" value="Ribosomal_uL10_bac"/>
</dbReference>
<dbReference type="InterPro" id="IPR047865">
    <property type="entry name" value="Ribosomal_uL10_bac_type"/>
</dbReference>
<dbReference type="InterPro" id="IPR002363">
    <property type="entry name" value="Ribosomal_uL10_CS_bac"/>
</dbReference>
<dbReference type="NCBIfam" id="NF000955">
    <property type="entry name" value="PRK00099.1-1"/>
    <property type="match status" value="1"/>
</dbReference>
<dbReference type="PANTHER" id="PTHR11560">
    <property type="entry name" value="39S RIBOSOMAL PROTEIN L10, MITOCHONDRIAL"/>
    <property type="match status" value="1"/>
</dbReference>
<dbReference type="Pfam" id="PF00466">
    <property type="entry name" value="Ribosomal_L10"/>
    <property type="match status" value="1"/>
</dbReference>
<dbReference type="SUPFAM" id="SSF160369">
    <property type="entry name" value="Ribosomal protein L10-like"/>
    <property type="match status" value="1"/>
</dbReference>
<dbReference type="PROSITE" id="PS01109">
    <property type="entry name" value="RIBOSOMAL_L10"/>
    <property type="match status" value="1"/>
</dbReference>
<accession>Q03ST7</accession>
<gene>
    <name evidence="1" type="primary">rplJ</name>
    <name type="ordered locus">LVIS_0590</name>
</gene>
<comment type="function">
    <text evidence="1">Forms part of the ribosomal stalk, playing a central role in the interaction of the ribosome with GTP-bound translation factors.</text>
</comment>
<comment type="subunit">
    <text evidence="1">Part of the ribosomal stalk of the 50S ribosomal subunit. The N-terminus interacts with L11 and the large rRNA to form the base of the stalk. The C-terminus forms an elongated spine to which L12 dimers bind in a sequential fashion forming a multimeric L10(L12)X complex.</text>
</comment>
<comment type="similarity">
    <text evidence="1">Belongs to the universal ribosomal protein uL10 family.</text>
</comment>
<protein>
    <recommendedName>
        <fullName evidence="1">Large ribosomal subunit protein uL10</fullName>
    </recommendedName>
    <alternativeName>
        <fullName evidence="2">50S ribosomal protein L10</fullName>
    </alternativeName>
</protein>
<sequence length="168" mass="18031">MSEKAIAVKAQHVEDVVEKFNNATSAIVVDYRGLTVEQVTDLRKQLREAGVQMNVIKNKILTRAAEKAGYGDLNDVFAGPTAVAFSNEDPIAPAKVLKKFADSVDALEIKGGYIEGNIVSIDEINVYATLPSREELLATLASQLQAPVRNVAYAIKAIVDKGDEGDAA</sequence>
<name>RL10_LEVBA</name>
<organism>
    <name type="scientific">Levilactobacillus brevis (strain ATCC 367 / BCRC 12310 / CIP 105137 / JCM 1170 / LMG 11437 / NCIMB 947 / NCTC 947)</name>
    <name type="common">Lactobacillus brevis</name>
    <dbReference type="NCBI Taxonomy" id="387344"/>
    <lineage>
        <taxon>Bacteria</taxon>
        <taxon>Bacillati</taxon>
        <taxon>Bacillota</taxon>
        <taxon>Bacilli</taxon>
        <taxon>Lactobacillales</taxon>
        <taxon>Lactobacillaceae</taxon>
        <taxon>Levilactobacillus</taxon>
    </lineage>
</organism>
<feature type="chain" id="PRO_1000005516" description="Large ribosomal subunit protein uL10">
    <location>
        <begin position="1"/>
        <end position="168"/>
    </location>
</feature>
<reference key="1">
    <citation type="journal article" date="2006" name="Proc. Natl. Acad. Sci. U.S.A.">
        <title>Comparative genomics of the lactic acid bacteria.</title>
        <authorList>
            <person name="Makarova K.S."/>
            <person name="Slesarev A."/>
            <person name="Wolf Y.I."/>
            <person name="Sorokin A."/>
            <person name="Mirkin B."/>
            <person name="Koonin E.V."/>
            <person name="Pavlov A."/>
            <person name="Pavlova N."/>
            <person name="Karamychev V."/>
            <person name="Polouchine N."/>
            <person name="Shakhova V."/>
            <person name="Grigoriev I."/>
            <person name="Lou Y."/>
            <person name="Rohksar D."/>
            <person name="Lucas S."/>
            <person name="Huang K."/>
            <person name="Goodstein D.M."/>
            <person name="Hawkins T."/>
            <person name="Plengvidhya V."/>
            <person name="Welker D."/>
            <person name="Hughes J."/>
            <person name="Goh Y."/>
            <person name="Benson A."/>
            <person name="Baldwin K."/>
            <person name="Lee J.-H."/>
            <person name="Diaz-Muniz I."/>
            <person name="Dosti B."/>
            <person name="Smeianov V."/>
            <person name="Wechter W."/>
            <person name="Barabote R."/>
            <person name="Lorca G."/>
            <person name="Altermann E."/>
            <person name="Barrangou R."/>
            <person name="Ganesan B."/>
            <person name="Xie Y."/>
            <person name="Rawsthorne H."/>
            <person name="Tamir D."/>
            <person name="Parker C."/>
            <person name="Breidt F."/>
            <person name="Broadbent J.R."/>
            <person name="Hutkins R."/>
            <person name="O'Sullivan D."/>
            <person name="Steele J."/>
            <person name="Unlu G."/>
            <person name="Saier M.H. Jr."/>
            <person name="Klaenhammer T."/>
            <person name="Richardson P."/>
            <person name="Kozyavkin S."/>
            <person name="Weimer B.C."/>
            <person name="Mills D.A."/>
        </authorList>
    </citation>
    <scope>NUCLEOTIDE SEQUENCE [LARGE SCALE GENOMIC DNA]</scope>
    <source>
        <strain>ATCC 367 / BCRC 12310 / CIP 105137 / JCM 1170 / LMG 11437 / NCIMB 947 / NCTC 947</strain>
    </source>
</reference>
<evidence type="ECO:0000255" key="1">
    <source>
        <dbReference type="HAMAP-Rule" id="MF_00362"/>
    </source>
</evidence>
<evidence type="ECO:0000305" key="2"/>
<proteinExistence type="inferred from homology"/>
<keyword id="KW-1185">Reference proteome</keyword>
<keyword id="KW-0687">Ribonucleoprotein</keyword>
<keyword id="KW-0689">Ribosomal protein</keyword>
<keyword id="KW-0694">RNA-binding</keyword>
<keyword id="KW-0699">rRNA-binding</keyword>